<proteinExistence type="inferred from homology"/>
<accession>Q02I77</accession>
<evidence type="ECO:0000255" key="1">
    <source>
        <dbReference type="HAMAP-Rule" id="MF_01522"/>
    </source>
</evidence>
<comment type="function">
    <text evidence="1">Transport of potassium into the cell. Likely operates as a K(+):H(+) symporter.</text>
</comment>
<comment type="catalytic activity">
    <reaction evidence="1">
        <text>K(+)(in) + H(+)(in) = K(+)(out) + H(+)(out)</text>
        <dbReference type="Rhea" id="RHEA:28490"/>
        <dbReference type="ChEBI" id="CHEBI:15378"/>
        <dbReference type="ChEBI" id="CHEBI:29103"/>
    </reaction>
    <physiologicalReaction direction="right-to-left" evidence="1">
        <dbReference type="Rhea" id="RHEA:28492"/>
    </physiologicalReaction>
</comment>
<comment type="subcellular location">
    <subcellularLocation>
        <location evidence="1">Cell inner membrane</location>
        <topology evidence="1">Multi-pass membrane protein</topology>
    </subcellularLocation>
</comment>
<comment type="similarity">
    <text evidence="1">Belongs to the HAK/KUP transporter (TC 2.A.72) family.</text>
</comment>
<dbReference type="EMBL" id="CP000438">
    <property type="protein sequence ID" value="ABJ10076.1"/>
    <property type="molecule type" value="Genomic_DNA"/>
</dbReference>
<dbReference type="RefSeq" id="WP_003140804.1">
    <property type="nucleotide sequence ID" value="NZ_CP034244.1"/>
</dbReference>
<dbReference type="KEGG" id="pau:PA14_52400"/>
<dbReference type="PseudoCAP" id="PA14_52400"/>
<dbReference type="HOGENOM" id="CLU_008142_4_2_6"/>
<dbReference type="BioCyc" id="PAER208963:G1G74-4409-MONOMER"/>
<dbReference type="Proteomes" id="UP000000653">
    <property type="component" value="Chromosome"/>
</dbReference>
<dbReference type="GO" id="GO:0005886">
    <property type="term" value="C:plasma membrane"/>
    <property type="evidence" value="ECO:0007669"/>
    <property type="project" value="UniProtKB-SubCell"/>
</dbReference>
<dbReference type="GO" id="GO:0015079">
    <property type="term" value="F:potassium ion transmembrane transporter activity"/>
    <property type="evidence" value="ECO:0007669"/>
    <property type="project" value="UniProtKB-UniRule"/>
</dbReference>
<dbReference type="GO" id="GO:0015293">
    <property type="term" value="F:symporter activity"/>
    <property type="evidence" value="ECO:0007669"/>
    <property type="project" value="UniProtKB-UniRule"/>
</dbReference>
<dbReference type="HAMAP" id="MF_01522">
    <property type="entry name" value="Kup"/>
    <property type="match status" value="1"/>
</dbReference>
<dbReference type="InterPro" id="IPR003855">
    <property type="entry name" value="K+_transporter"/>
</dbReference>
<dbReference type="InterPro" id="IPR053952">
    <property type="entry name" value="K_trans_C"/>
</dbReference>
<dbReference type="InterPro" id="IPR053951">
    <property type="entry name" value="K_trans_N"/>
</dbReference>
<dbReference type="InterPro" id="IPR023051">
    <property type="entry name" value="Kup"/>
</dbReference>
<dbReference type="PANTHER" id="PTHR30540:SF79">
    <property type="entry name" value="LOW AFFINITY POTASSIUM TRANSPORT SYSTEM PROTEIN KUP"/>
    <property type="match status" value="1"/>
</dbReference>
<dbReference type="PANTHER" id="PTHR30540">
    <property type="entry name" value="OSMOTIC STRESS POTASSIUM TRANSPORTER"/>
    <property type="match status" value="1"/>
</dbReference>
<dbReference type="Pfam" id="PF02705">
    <property type="entry name" value="K_trans"/>
    <property type="match status" value="1"/>
</dbReference>
<dbReference type="Pfam" id="PF22776">
    <property type="entry name" value="K_trans_C"/>
    <property type="match status" value="1"/>
</dbReference>
<protein>
    <recommendedName>
        <fullName evidence="1">Probable potassium transport system protein Kup</fullName>
    </recommendedName>
</protein>
<gene>
    <name evidence="1" type="primary">kup</name>
    <name type="ordered locus">PA14_52400</name>
</gene>
<name>KUP_PSEAB</name>
<keyword id="KW-0997">Cell inner membrane</keyword>
<keyword id="KW-1003">Cell membrane</keyword>
<keyword id="KW-0406">Ion transport</keyword>
<keyword id="KW-0472">Membrane</keyword>
<keyword id="KW-0630">Potassium</keyword>
<keyword id="KW-0633">Potassium transport</keyword>
<keyword id="KW-0769">Symport</keyword>
<keyword id="KW-0812">Transmembrane</keyword>
<keyword id="KW-1133">Transmembrane helix</keyword>
<keyword id="KW-0813">Transport</keyword>
<organism>
    <name type="scientific">Pseudomonas aeruginosa (strain UCBPP-PA14)</name>
    <dbReference type="NCBI Taxonomy" id="208963"/>
    <lineage>
        <taxon>Bacteria</taxon>
        <taxon>Pseudomonadati</taxon>
        <taxon>Pseudomonadota</taxon>
        <taxon>Gammaproteobacteria</taxon>
        <taxon>Pseudomonadales</taxon>
        <taxon>Pseudomonadaceae</taxon>
        <taxon>Pseudomonas</taxon>
    </lineage>
</organism>
<feature type="chain" id="PRO_0000279809" description="Probable potassium transport system protein Kup">
    <location>
        <begin position="1"/>
        <end position="634"/>
    </location>
</feature>
<feature type="transmembrane region" description="Helical" evidence="1">
    <location>
        <begin position="19"/>
        <end position="39"/>
    </location>
</feature>
<feature type="transmembrane region" description="Helical" evidence="1">
    <location>
        <begin position="62"/>
        <end position="82"/>
    </location>
</feature>
<feature type="transmembrane region" description="Helical" evidence="1">
    <location>
        <begin position="113"/>
        <end position="133"/>
    </location>
</feature>
<feature type="transmembrane region" description="Helical" evidence="1">
    <location>
        <begin position="150"/>
        <end position="170"/>
    </location>
</feature>
<feature type="transmembrane region" description="Helical" evidence="1">
    <location>
        <begin position="177"/>
        <end position="197"/>
    </location>
</feature>
<feature type="transmembrane region" description="Helical" evidence="1">
    <location>
        <begin position="225"/>
        <end position="245"/>
    </location>
</feature>
<feature type="transmembrane region" description="Helical" evidence="1">
    <location>
        <begin position="259"/>
        <end position="279"/>
    </location>
</feature>
<feature type="transmembrane region" description="Helical" evidence="1">
    <location>
        <begin position="291"/>
        <end position="311"/>
    </location>
</feature>
<feature type="transmembrane region" description="Helical" evidence="1">
    <location>
        <begin position="349"/>
        <end position="369"/>
    </location>
</feature>
<feature type="transmembrane region" description="Helical" evidence="1">
    <location>
        <begin position="379"/>
        <end position="399"/>
    </location>
</feature>
<feature type="transmembrane region" description="Helical" evidence="1">
    <location>
        <begin position="406"/>
        <end position="426"/>
    </location>
</feature>
<feature type="transmembrane region" description="Helical" evidence="1">
    <location>
        <begin position="431"/>
        <end position="451"/>
    </location>
</feature>
<sequence>MSDAATRAEETSEGHSSSAIGLMVGAVGVCYGDIGTSPLYTLKEVFIGGYGVQANHDGVLGVLSLIFWSLVWVVSIKYVIFVLRADNQGEGGVMALSALARRAAAPFGRLQTFVVVAGLIGAALFYGDSMITPAISVLSAVEGLEIAFDGLEHWTVPLALIVLIGLFLIQKHGTARIGILFGPVMVLWFGALAALGVYGVIQQPEVLQAMNPVWAVRFFGSHPGIGVAILGATVLALTGAEALYADMGHFGRKPIARAWFLLVLPALVLNYFGQGATILSNAEAARNPFYLLAPGWALLPMVALSTLATVIASQAVISGAFSLTRQAIQLGYVPRMTIQHTSSHEQGQIYIGGVNWALMVGVVLLVLGFESSASLAAAYGVAVTGTMLITTLLMGVVIWRLWKWPLWLGVPFFCVMLAVDSLFFAANLPKVIQGGAFPVIAGIVIFILMSTWKRGRQLLVERLDEGSLPLSVFISSMRVQPPHRVQGTAVFLTARTDAVPHALLHNLLHNQVLHEQVVLLTVVNEDSPRVPPDRRFEVEAYGDGFFRVILHFGFMEEPDIPAALRLCHLNELDFSPMRTTYFLSRETVIPSKRIGMARWREGLFAFLLKNANGNLRYFNLPLNRVIELGTQVEI</sequence>
<reference key="1">
    <citation type="journal article" date="2006" name="Genome Biol.">
        <title>Genomic analysis reveals that Pseudomonas aeruginosa virulence is combinatorial.</title>
        <authorList>
            <person name="Lee D.G."/>
            <person name="Urbach J.M."/>
            <person name="Wu G."/>
            <person name="Liberati N.T."/>
            <person name="Feinbaum R.L."/>
            <person name="Miyata S."/>
            <person name="Diggins L.T."/>
            <person name="He J."/>
            <person name="Saucier M."/>
            <person name="Deziel E."/>
            <person name="Friedman L."/>
            <person name="Li L."/>
            <person name="Grills G."/>
            <person name="Montgomery K."/>
            <person name="Kucherlapati R."/>
            <person name="Rahme L.G."/>
            <person name="Ausubel F.M."/>
        </authorList>
    </citation>
    <scope>NUCLEOTIDE SEQUENCE [LARGE SCALE GENOMIC DNA]</scope>
    <source>
        <strain>UCBPP-PA14</strain>
    </source>
</reference>